<comment type="function">
    <text evidence="4 6">Acts as a novel regulator of senescence. Involved in the formation of senescence-associated heterochromatin foci (SAHF), which represses expression of proliferation-promoting genes. Binds to proliferation-promoting genes. May be required for replication-independent chromatin assembly.</text>
</comment>
<comment type="subunit">
    <text evidence="4 5 6">Component of a complex that includes at least ASF1A, CABIN1, HIRA, histone H3.3 and UBN1. Interacts with HIRA (via WD repeat domain); the interaction is direct. Interacts with ASF1A, CEBPA, TJP1, TJP2 and TJP3.</text>
</comment>
<comment type="subunit">
    <text evidence="3">(Microbial infection) Interacts with Epstein-Barr virus BZLF1.</text>
</comment>
<comment type="interaction">
    <interactant intactId="EBI-2880187">
        <id>Q9NPG3</id>
    </interactant>
    <interactant intactId="EBI-372342">
        <id>P54198</id>
        <label>HIRA</label>
    </interactant>
    <organismsDiffer>false</organismsDiffer>
    <experiments>11</experiments>
</comment>
<comment type="subcellular location">
    <subcellularLocation>
        <location>Nucleus</location>
        <location>Nucleoplasm</location>
    </subcellularLocation>
    <subcellularLocation>
        <location>Nucleus</location>
        <location>PML body</location>
    </subcellularLocation>
    <subcellularLocation>
        <location>Cell junction</location>
        <location>Tight junction</location>
    </subcellularLocation>
    <text>Localized as a nuclear speckled-like pattern in proliferating primary fibroblasts. Colocalizes with HIRA, PML and SP100 in PML bodies of senescent cells. Colocalizes with TJP1 and CLDN1. Detected along the upper granular cell layer of epidermis. When overexpressed, accumulates in the nucleus in cells showing defective cytokinesis.</text>
</comment>
<comment type="alternative products">
    <event type="alternative splicing"/>
    <isoform>
        <id>Q9NPG3-1</id>
        <name>1</name>
        <sequence type="displayed"/>
    </isoform>
    <isoform>
        <id>Q9NPG3-2</id>
        <name>2</name>
        <sequence type="described" ref="VSP_036971"/>
    </isoform>
</comment>
<comment type="tissue specificity">
    <text evidence="3 6">Ubiquitous. Also expressed in numerous tumors and cancer cell lines.</text>
</comment>
<comment type="similarity">
    <text evidence="8">Belongs to the ubinuclein family.</text>
</comment>
<gene>
    <name type="primary">UBN1</name>
</gene>
<keyword id="KW-0002">3D-structure</keyword>
<keyword id="KW-0007">Acetylation</keyword>
<keyword id="KW-0025">Alternative splicing</keyword>
<keyword id="KW-0965">Cell junction</keyword>
<keyword id="KW-0156">Chromatin regulator</keyword>
<keyword id="KW-0175">Coiled coil</keyword>
<keyword id="KW-0238">DNA-binding</keyword>
<keyword id="KW-0945">Host-virus interaction</keyword>
<keyword id="KW-0539">Nucleus</keyword>
<keyword id="KW-0597">Phosphoprotein</keyword>
<keyword id="KW-1267">Proteomics identification</keyword>
<keyword id="KW-1185">Reference proteome</keyword>
<keyword id="KW-0796">Tight junction</keyword>
<dbReference type="EMBL" id="AF108460">
    <property type="protein sequence ID" value="AAF31755.1"/>
    <property type="molecule type" value="mRNA"/>
</dbReference>
<dbReference type="EMBL" id="AF108461">
    <property type="protein sequence ID" value="AAF31756.1"/>
    <property type="molecule type" value="mRNA"/>
</dbReference>
<dbReference type="EMBL" id="AF108459">
    <property type="protein sequence ID" value="AAF34869.1"/>
    <property type="molecule type" value="Genomic_DNA"/>
</dbReference>
<dbReference type="EMBL" id="AF108454">
    <property type="protein sequence ID" value="AAF34869.1"/>
    <property type="status" value="JOINED"/>
    <property type="molecule type" value="Genomic_DNA"/>
</dbReference>
<dbReference type="EMBL" id="AF108455">
    <property type="protein sequence ID" value="AAF34869.1"/>
    <property type="status" value="JOINED"/>
    <property type="molecule type" value="Genomic_DNA"/>
</dbReference>
<dbReference type="EMBL" id="AF108456">
    <property type="protein sequence ID" value="AAF34869.1"/>
    <property type="status" value="JOINED"/>
    <property type="molecule type" value="Genomic_DNA"/>
</dbReference>
<dbReference type="EMBL" id="AF108457">
    <property type="protein sequence ID" value="AAF34869.1"/>
    <property type="status" value="JOINED"/>
    <property type="molecule type" value="Genomic_DNA"/>
</dbReference>
<dbReference type="EMBL" id="AF108458">
    <property type="protein sequence ID" value="AAF34869.1"/>
    <property type="status" value="JOINED"/>
    <property type="molecule type" value="Genomic_DNA"/>
</dbReference>
<dbReference type="EMBL" id="AK300131">
    <property type="protein sequence ID" value="BAH13219.1"/>
    <property type="molecule type" value="mRNA"/>
</dbReference>
<dbReference type="EMBL" id="AC020663">
    <property type="status" value="NOT_ANNOTATED_CDS"/>
    <property type="molecule type" value="Genomic_DNA"/>
</dbReference>
<dbReference type="EMBL" id="AC027687">
    <property type="status" value="NOT_ANNOTATED_CDS"/>
    <property type="molecule type" value="Genomic_DNA"/>
</dbReference>
<dbReference type="EMBL" id="CH471112">
    <property type="protein sequence ID" value="EAW85249.1"/>
    <property type="molecule type" value="Genomic_DNA"/>
</dbReference>
<dbReference type="EMBL" id="CH471112">
    <property type="protein sequence ID" value="EAW85250.1"/>
    <property type="molecule type" value="Genomic_DNA"/>
</dbReference>
<dbReference type="EMBL" id="U19346">
    <property type="protein sequence ID" value="AAA64188.1"/>
    <property type="molecule type" value="mRNA"/>
</dbReference>
<dbReference type="CCDS" id="CCDS10525.1">
    <molecule id="Q9NPG3-1"/>
</dbReference>
<dbReference type="CCDS" id="CCDS73822.1">
    <molecule id="Q9NPG3-2"/>
</dbReference>
<dbReference type="PIR" id="G01628">
    <property type="entry name" value="G01628"/>
</dbReference>
<dbReference type="RefSeq" id="NP_001072982.1">
    <molecule id="Q9NPG3-1"/>
    <property type="nucleotide sequence ID" value="NM_001079514.3"/>
</dbReference>
<dbReference type="RefSeq" id="NP_001275585.1">
    <molecule id="Q9NPG3-2"/>
    <property type="nucleotide sequence ID" value="NM_001288656.1"/>
</dbReference>
<dbReference type="RefSeq" id="XP_016878678.1">
    <property type="nucleotide sequence ID" value="XM_017023189.1"/>
</dbReference>
<dbReference type="RefSeq" id="XP_047289993.1">
    <molecule id="Q9NPG3-1"/>
    <property type="nucleotide sequence ID" value="XM_047434037.1"/>
</dbReference>
<dbReference type="RefSeq" id="XP_054236164.1">
    <molecule id="Q9NPG3-1"/>
    <property type="nucleotide sequence ID" value="XM_054380189.1"/>
</dbReference>
<dbReference type="PDB" id="4ZBJ">
    <property type="method" value="X-ray"/>
    <property type="resolution" value="2.25 A"/>
    <property type="chains" value="D=122-148"/>
</dbReference>
<dbReference type="PDBsum" id="4ZBJ"/>
<dbReference type="SMR" id="Q9NPG3"/>
<dbReference type="BioGRID" id="118934">
    <property type="interactions" value="78"/>
</dbReference>
<dbReference type="CORUM" id="Q9NPG3"/>
<dbReference type="FunCoup" id="Q9NPG3">
    <property type="interactions" value="3100"/>
</dbReference>
<dbReference type="IntAct" id="Q9NPG3">
    <property type="interactions" value="40"/>
</dbReference>
<dbReference type="MINT" id="Q9NPG3"/>
<dbReference type="STRING" id="9606.ENSP00000262376"/>
<dbReference type="GlyCosmos" id="Q9NPG3">
    <property type="glycosylation" value="16 sites, 2 glycans"/>
</dbReference>
<dbReference type="GlyGen" id="Q9NPG3">
    <property type="glycosylation" value="27 sites, 2 O-linked glycans (27 sites)"/>
</dbReference>
<dbReference type="iPTMnet" id="Q9NPG3"/>
<dbReference type="PhosphoSitePlus" id="Q9NPG3"/>
<dbReference type="BioMuta" id="UBN1"/>
<dbReference type="DMDM" id="116242836"/>
<dbReference type="jPOST" id="Q9NPG3"/>
<dbReference type="MassIVE" id="Q9NPG3"/>
<dbReference type="PaxDb" id="9606-ENSP00000379894"/>
<dbReference type="PeptideAtlas" id="Q9NPG3"/>
<dbReference type="ProteomicsDB" id="81991">
    <molecule id="Q9NPG3-1"/>
</dbReference>
<dbReference type="ProteomicsDB" id="81992">
    <molecule id="Q9NPG3-2"/>
</dbReference>
<dbReference type="Pumba" id="Q9NPG3"/>
<dbReference type="Antibodypedia" id="11234">
    <property type="antibodies" value="164 antibodies from 34 providers"/>
</dbReference>
<dbReference type="DNASU" id="29855"/>
<dbReference type="Ensembl" id="ENST00000262376.11">
    <molecule id="Q9NPG3-1"/>
    <property type="protein sequence ID" value="ENSP00000262376.5"/>
    <property type="gene ID" value="ENSG00000118900.15"/>
</dbReference>
<dbReference type="Ensembl" id="ENST00000396658.8">
    <molecule id="Q9NPG3-1"/>
    <property type="protein sequence ID" value="ENSP00000379894.3"/>
    <property type="gene ID" value="ENSG00000118900.15"/>
</dbReference>
<dbReference type="Ensembl" id="ENST00000590769.5">
    <molecule id="Q9NPG3-2"/>
    <property type="protein sequence ID" value="ENSP00000468740.1"/>
    <property type="gene ID" value="ENSG00000118900.15"/>
</dbReference>
<dbReference type="GeneID" id="29855"/>
<dbReference type="KEGG" id="hsa:29855"/>
<dbReference type="MANE-Select" id="ENST00000262376.11">
    <property type="protein sequence ID" value="ENSP00000262376.5"/>
    <property type="RefSeq nucleotide sequence ID" value="NM_001079514.3"/>
    <property type="RefSeq protein sequence ID" value="NP_001072982.1"/>
</dbReference>
<dbReference type="UCSC" id="uc002cyb.5">
    <molecule id="Q9NPG3-1"/>
    <property type="organism name" value="human"/>
</dbReference>
<dbReference type="AGR" id="HGNC:12506"/>
<dbReference type="CTD" id="29855"/>
<dbReference type="DisGeNET" id="29855"/>
<dbReference type="GeneCards" id="UBN1"/>
<dbReference type="HGNC" id="HGNC:12506">
    <property type="gene designation" value="UBN1"/>
</dbReference>
<dbReference type="HPA" id="ENSG00000118900">
    <property type="expression patterns" value="Low tissue specificity"/>
</dbReference>
<dbReference type="MalaCards" id="UBN1"/>
<dbReference type="MIM" id="609771">
    <property type="type" value="gene"/>
</dbReference>
<dbReference type="neXtProt" id="NX_Q9NPG3"/>
<dbReference type="OpenTargets" id="ENSG00000118900"/>
<dbReference type="PharmGKB" id="PA37153"/>
<dbReference type="VEuPathDB" id="HostDB:ENSG00000118900"/>
<dbReference type="eggNOG" id="KOG4786">
    <property type="taxonomic scope" value="Eukaryota"/>
</dbReference>
<dbReference type="GeneTree" id="ENSGT00940000158857"/>
<dbReference type="HOGENOM" id="CLU_007400_0_0_1"/>
<dbReference type="InParanoid" id="Q9NPG3"/>
<dbReference type="OMA" id="FHHGLAH"/>
<dbReference type="OrthoDB" id="68076at2759"/>
<dbReference type="PAN-GO" id="Q9NPG3">
    <property type="GO annotations" value="2 GO annotations based on evolutionary models"/>
</dbReference>
<dbReference type="PhylomeDB" id="Q9NPG3"/>
<dbReference type="TreeFam" id="TF326088"/>
<dbReference type="PathwayCommons" id="Q9NPG3"/>
<dbReference type="Reactome" id="R-HSA-2559584">
    <property type="pathway name" value="Formation of Senescence-Associated Heterochromatin Foci (SAHF)"/>
</dbReference>
<dbReference type="SignaLink" id="Q9NPG3"/>
<dbReference type="SIGNOR" id="Q9NPG3"/>
<dbReference type="BioGRID-ORCS" id="29855">
    <property type="hits" value="15 hits in 1166 CRISPR screens"/>
</dbReference>
<dbReference type="ChiTaRS" id="UBN1">
    <property type="organism name" value="human"/>
</dbReference>
<dbReference type="EvolutionaryTrace" id="Q9NPG3"/>
<dbReference type="GenomeRNAi" id="29855"/>
<dbReference type="Pharos" id="Q9NPG3">
    <property type="development level" value="Tbio"/>
</dbReference>
<dbReference type="PRO" id="PR:Q9NPG3"/>
<dbReference type="Proteomes" id="UP000005640">
    <property type="component" value="Chromosome 16"/>
</dbReference>
<dbReference type="RNAct" id="Q9NPG3">
    <property type="molecule type" value="protein"/>
</dbReference>
<dbReference type="Bgee" id="ENSG00000118900">
    <property type="expression patterns" value="Expressed in lower esophagus mucosa and 211 other cell types or tissues"/>
</dbReference>
<dbReference type="ExpressionAtlas" id="Q9NPG3">
    <property type="expression patterns" value="baseline and differential"/>
</dbReference>
<dbReference type="GO" id="GO:0005923">
    <property type="term" value="C:bicellular tight junction"/>
    <property type="evidence" value="ECO:0000250"/>
    <property type="project" value="UniProtKB"/>
</dbReference>
<dbReference type="GO" id="GO:0034451">
    <property type="term" value="C:centriolar satellite"/>
    <property type="evidence" value="ECO:0000314"/>
    <property type="project" value="HPA"/>
</dbReference>
<dbReference type="GO" id="GO:0016604">
    <property type="term" value="C:nuclear body"/>
    <property type="evidence" value="ECO:0000314"/>
    <property type="project" value="HPA"/>
</dbReference>
<dbReference type="GO" id="GO:0005654">
    <property type="term" value="C:nucleoplasm"/>
    <property type="evidence" value="ECO:0000314"/>
    <property type="project" value="HPA"/>
</dbReference>
<dbReference type="GO" id="GO:0005634">
    <property type="term" value="C:nucleus"/>
    <property type="evidence" value="ECO:0000314"/>
    <property type="project" value="GO_Central"/>
</dbReference>
<dbReference type="GO" id="GO:0016605">
    <property type="term" value="C:PML body"/>
    <property type="evidence" value="ECO:0007669"/>
    <property type="project" value="UniProtKB-SubCell"/>
</dbReference>
<dbReference type="GO" id="GO:0003677">
    <property type="term" value="F:DNA binding"/>
    <property type="evidence" value="ECO:0007669"/>
    <property type="project" value="UniProtKB-KW"/>
</dbReference>
<dbReference type="GO" id="GO:0006325">
    <property type="term" value="P:chromatin organization"/>
    <property type="evidence" value="ECO:0000318"/>
    <property type="project" value="GO_Central"/>
</dbReference>
<dbReference type="GO" id="GO:0006334">
    <property type="term" value="P:nucleosome assembly"/>
    <property type="evidence" value="ECO:0000314"/>
    <property type="project" value="GO_Central"/>
</dbReference>
<dbReference type="InterPro" id="IPR014840">
    <property type="entry name" value="HRD"/>
</dbReference>
<dbReference type="InterPro" id="IPR026947">
    <property type="entry name" value="UBN_middle_dom"/>
</dbReference>
<dbReference type="PANTHER" id="PTHR21669">
    <property type="entry name" value="CAPZ-INTERACTING PROTEIN AND RELATED PROTEINS"/>
    <property type="match status" value="1"/>
</dbReference>
<dbReference type="PANTHER" id="PTHR21669:SF12">
    <property type="entry name" value="UBINUCLEIN-1"/>
    <property type="match status" value="1"/>
</dbReference>
<dbReference type="Pfam" id="PF08729">
    <property type="entry name" value="HUN"/>
    <property type="match status" value="1"/>
</dbReference>
<dbReference type="Pfam" id="PF14075">
    <property type="entry name" value="UBN_AB"/>
    <property type="match status" value="1"/>
</dbReference>
<evidence type="ECO:0000255" key="1"/>
<evidence type="ECO:0000256" key="2">
    <source>
        <dbReference type="SAM" id="MobiDB-lite"/>
    </source>
</evidence>
<evidence type="ECO:0000269" key="3">
    <source>
    </source>
</evidence>
<evidence type="ECO:0000269" key="4">
    <source>
    </source>
</evidence>
<evidence type="ECO:0000269" key="5">
    <source>
    </source>
</evidence>
<evidence type="ECO:0000269" key="6">
    <source>
    </source>
</evidence>
<evidence type="ECO:0000303" key="7">
    <source>
    </source>
</evidence>
<evidence type="ECO:0000305" key="8"/>
<evidence type="ECO:0007744" key="9">
    <source>
    </source>
</evidence>
<evidence type="ECO:0007744" key="10">
    <source>
    </source>
</evidence>
<evidence type="ECO:0007744" key="11">
    <source>
    </source>
</evidence>
<evidence type="ECO:0007744" key="12">
    <source>
    </source>
</evidence>
<evidence type="ECO:0007744" key="13">
    <source>
    </source>
</evidence>
<evidence type="ECO:0007744" key="14">
    <source>
    </source>
</evidence>
<evidence type="ECO:0007744" key="15">
    <source>
    </source>
</evidence>
<evidence type="ECO:0007829" key="16">
    <source>
        <dbReference type="PDB" id="4ZBJ"/>
    </source>
</evidence>
<protein>
    <recommendedName>
        <fullName>Ubinuclein-1</fullName>
    </recommendedName>
    <alternativeName>
        <fullName>HIRA-binding protein</fullName>
    </alternativeName>
    <alternativeName>
        <fullName>Protein VT4</fullName>
    </alternativeName>
    <alternativeName>
        <fullName>Ubiquitously expressed nuclear protein</fullName>
    </alternativeName>
</protein>
<reference key="1">
    <citation type="journal article" date="2000" name="J. Cell Biol.">
        <title>Ubinuclein, a novel nuclear protein interacting with cellular and viral transcription factors.</title>
        <authorList>
            <person name="Aho S."/>
            <person name="Buisson M."/>
            <person name="Pajunen T."/>
            <person name="Ryoo Y.W."/>
            <person name="Giot J.-F."/>
            <person name="Gruffat H."/>
            <person name="Sergeant A."/>
            <person name="Uitto J."/>
        </authorList>
    </citation>
    <scope>NUCLEOTIDE SEQUENCE [GENOMIC DNA / MRNA] (ISOFORM 1)</scope>
    <scope>INTERACTION WITH EPSTEIN-BARR VIRUS BZLF1 (MICROBIAL INFECTION) AND CEBPA</scope>
    <scope>SUBCELLULAR LOCATION</scope>
    <scope>TISSUE SPECIFICITY</scope>
    <source>
        <tissue>Cervix carcinoma</tissue>
    </source>
</reference>
<reference key="2">
    <citation type="journal article" date="2004" name="Nat. Genet.">
        <title>Complete sequencing and characterization of 21,243 full-length human cDNAs.</title>
        <authorList>
            <person name="Ota T."/>
            <person name="Suzuki Y."/>
            <person name="Nishikawa T."/>
            <person name="Otsuki T."/>
            <person name="Sugiyama T."/>
            <person name="Irie R."/>
            <person name="Wakamatsu A."/>
            <person name="Hayashi K."/>
            <person name="Sato H."/>
            <person name="Nagai K."/>
            <person name="Kimura K."/>
            <person name="Makita H."/>
            <person name="Sekine M."/>
            <person name="Obayashi M."/>
            <person name="Nishi T."/>
            <person name="Shibahara T."/>
            <person name="Tanaka T."/>
            <person name="Ishii S."/>
            <person name="Yamamoto J."/>
            <person name="Saito K."/>
            <person name="Kawai Y."/>
            <person name="Isono Y."/>
            <person name="Nakamura Y."/>
            <person name="Nagahari K."/>
            <person name="Murakami K."/>
            <person name="Yasuda T."/>
            <person name="Iwayanagi T."/>
            <person name="Wagatsuma M."/>
            <person name="Shiratori A."/>
            <person name="Sudo H."/>
            <person name="Hosoiri T."/>
            <person name="Kaku Y."/>
            <person name="Kodaira H."/>
            <person name="Kondo H."/>
            <person name="Sugawara M."/>
            <person name="Takahashi M."/>
            <person name="Kanda K."/>
            <person name="Yokoi T."/>
            <person name="Furuya T."/>
            <person name="Kikkawa E."/>
            <person name="Omura Y."/>
            <person name="Abe K."/>
            <person name="Kamihara K."/>
            <person name="Katsuta N."/>
            <person name="Sato K."/>
            <person name="Tanikawa M."/>
            <person name="Yamazaki M."/>
            <person name="Ninomiya K."/>
            <person name="Ishibashi T."/>
            <person name="Yamashita H."/>
            <person name="Murakawa K."/>
            <person name="Fujimori K."/>
            <person name="Tanai H."/>
            <person name="Kimata M."/>
            <person name="Watanabe M."/>
            <person name="Hiraoka S."/>
            <person name="Chiba Y."/>
            <person name="Ishida S."/>
            <person name="Ono Y."/>
            <person name="Takiguchi S."/>
            <person name="Watanabe S."/>
            <person name="Yosida M."/>
            <person name="Hotuta T."/>
            <person name="Kusano J."/>
            <person name="Kanehori K."/>
            <person name="Takahashi-Fujii A."/>
            <person name="Hara H."/>
            <person name="Tanase T.-O."/>
            <person name="Nomura Y."/>
            <person name="Togiya S."/>
            <person name="Komai F."/>
            <person name="Hara R."/>
            <person name="Takeuchi K."/>
            <person name="Arita M."/>
            <person name="Imose N."/>
            <person name="Musashino K."/>
            <person name="Yuuki H."/>
            <person name="Oshima A."/>
            <person name="Sasaki N."/>
            <person name="Aotsuka S."/>
            <person name="Yoshikawa Y."/>
            <person name="Matsunawa H."/>
            <person name="Ichihara T."/>
            <person name="Shiohata N."/>
            <person name="Sano S."/>
            <person name="Moriya S."/>
            <person name="Momiyama H."/>
            <person name="Satoh N."/>
            <person name="Takami S."/>
            <person name="Terashima Y."/>
            <person name="Suzuki O."/>
            <person name="Nakagawa S."/>
            <person name="Senoh A."/>
            <person name="Mizoguchi H."/>
            <person name="Goto Y."/>
            <person name="Shimizu F."/>
            <person name="Wakebe H."/>
            <person name="Hishigaki H."/>
            <person name="Watanabe T."/>
            <person name="Sugiyama A."/>
            <person name="Takemoto M."/>
            <person name="Kawakami B."/>
            <person name="Yamazaki M."/>
            <person name="Watanabe K."/>
            <person name="Kumagai A."/>
            <person name="Itakura S."/>
            <person name="Fukuzumi Y."/>
            <person name="Fujimori Y."/>
            <person name="Komiyama M."/>
            <person name="Tashiro H."/>
            <person name="Tanigami A."/>
            <person name="Fujiwara T."/>
            <person name="Ono T."/>
            <person name="Yamada K."/>
            <person name="Fujii Y."/>
            <person name="Ozaki K."/>
            <person name="Hirao M."/>
            <person name="Ohmori Y."/>
            <person name="Kawabata A."/>
            <person name="Hikiji T."/>
            <person name="Kobatake N."/>
            <person name="Inagaki H."/>
            <person name="Ikema Y."/>
            <person name="Okamoto S."/>
            <person name="Okitani R."/>
            <person name="Kawakami T."/>
            <person name="Noguchi S."/>
            <person name="Itoh T."/>
            <person name="Shigeta K."/>
            <person name="Senba T."/>
            <person name="Matsumura K."/>
            <person name="Nakajima Y."/>
            <person name="Mizuno T."/>
            <person name="Morinaga M."/>
            <person name="Sasaki M."/>
            <person name="Togashi T."/>
            <person name="Oyama M."/>
            <person name="Hata H."/>
            <person name="Watanabe M."/>
            <person name="Komatsu T."/>
            <person name="Mizushima-Sugano J."/>
            <person name="Satoh T."/>
            <person name="Shirai Y."/>
            <person name="Takahashi Y."/>
            <person name="Nakagawa K."/>
            <person name="Okumura K."/>
            <person name="Nagase T."/>
            <person name="Nomura N."/>
            <person name="Kikuchi H."/>
            <person name="Masuho Y."/>
            <person name="Yamashita R."/>
            <person name="Nakai K."/>
            <person name="Yada T."/>
            <person name="Nakamura Y."/>
            <person name="Ohara O."/>
            <person name="Isogai T."/>
            <person name="Sugano S."/>
        </authorList>
    </citation>
    <scope>NUCLEOTIDE SEQUENCE [LARGE SCALE MRNA] (ISOFORM 2)</scope>
    <source>
        <tissue>Placenta</tissue>
    </source>
</reference>
<reference key="3">
    <citation type="journal article" date="2004" name="Nature">
        <title>The sequence and analysis of duplication-rich human chromosome 16.</title>
        <authorList>
            <person name="Martin J."/>
            <person name="Han C."/>
            <person name="Gordon L.A."/>
            <person name="Terry A."/>
            <person name="Prabhakar S."/>
            <person name="She X."/>
            <person name="Xie G."/>
            <person name="Hellsten U."/>
            <person name="Chan Y.M."/>
            <person name="Altherr M."/>
            <person name="Couronne O."/>
            <person name="Aerts A."/>
            <person name="Bajorek E."/>
            <person name="Black S."/>
            <person name="Blumer H."/>
            <person name="Branscomb E."/>
            <person name="Brown N.C."/>
            <person name="Bruno W.J."/>
            <person name="Buckingham J.M."/>
            <person name="Callen D.F."/>
            <person name="Campbell C.S."/>
            <person name="Campbell M.L."/>
            <person name="Campbell E.W."/>
            <person name="Caoile C."/>
            <person name="Challacombe J.F."/>
            <person name="Chasteen L.A."/>
            <person name="Chertkov O."/>
            <person name="Chi H.C."/>
            <person name="Christensen M."/>
            <person name="Clark L.M."/>
            <person name="Cohn J.D."/>
            <person name="Denys M."/>
            <person name="Detter J.C."/>
            <person name="Dickson M."/>
            <person name="Dimitrijevic-Bussod M."/>
            <person name="Escobar J."/>
            <person name="Fawcett J.J."/>
            <person name="Flowers D."/>
            <person name="Fotopulos D."/>
            <person name="Glavina T."/>
            <person name="Gomez M."/>
            <person name="Gonzales E."/>
            <person name="Goodstein D."/>
            <person name="Goodwin L.A."/>
            <person name="Grady D.L."/>
            <person name="Grigoriev I."/>
            <person name="Groza M."/>
            <person name="Hammon N."/>
            <person name="Hawkins T."/>
            <person name="Haydu L."/>
            <person name="Hildebrand C.E."/>
            <person name="Huang W."/>
            <person name="Israni S."/>
            <person name="Jett J."/>
            <person name="Jewett P.B."/>
            <person name="Kadner K."/>
            <person name="Kimball H."/>
            <person name="Kobayashi A."/>
            <person name="Krawczyk M.-C."/>
            <person name="Leyba T."/>
            <person name="Longmire J.L."/>
            <person name="Lopez F."/>
            <person name="Lou Y."/>
            <person name="Lowry S."/>
            <person name="Ludeman T."/>
            <person name="Manohar C.F."/>
            <person name="Mark G.A."/>
            <person name="McMurray K.L."/>
            <person name="Meincke L.J."/>
            <person name="Morgan J."/>
            <person name="Moyzis R.K."/>
            <person name="Mundt M.O."/>
            <person name="Munk A.C."/>
            <person name="Nandkeshwar R.D."/>
            <person name="Pitluck S."/>
            <person name="Pollard M."/>
            <person name="Predki P."/>
            <person name="Parson-Quintana B."/>
            <person name="Ramirez L."/>
            <person name="Rash S."/>
            <person name="Retterer J."/>
            <person name="Ricke D.O."/>
            <person name="Robinson D.L."/>
            <person name="Rodriguez A."/>
            <person name="Salamov A."/>
            <person name="Saunders E.H."/>
            <person name="Scott D."/>
            <person name="Shough T."/>
            <person name="Stallings R.L."/>
            <person name="Stalvey M."/>
            <person name="Sutherland R.D."/>
            <person name="Tapia R."/>
            <person name="Tesmer J.G."/>
            <person name="Thayer N."/>
            <person name="Thompson L.S."/>
            <person name="Tice H."/>
            <person name="Torney D.C."/>
            <person name="Tran-Gyamfi M."/>
            <person name="Tsai M."/>
            <person name="Ulanovsky L.E."/>
            <person name="Ustaszewska A."/>
            <person name="Vo N."/>
            <person name="White P.S."/>
            <person name="Williams A.L."/>
            <person name="Wills P.L."/>
            <person name="Wu J.-R."/>
            <person name="Wu K."/>
            <person name="Yang J."/>
            <person name="DeJong P."/>
            <person name="Bruce D."/>
            <person name="Doggett N.A."/>
            <person name="Deaven L."/>
            <person name="Schmutz J."/>
            <person name="Grimwood J."/>
            <person name="Richardson P."/>
            <person name="Rokhsar D.S."/>
            <person name="Eichler E.E."/>
            <person name="Gilna P."/>
            <person name="Lucas S.M."/>
            <person name="Myers R.M."/>
            <person name="Rubin E.M."/>
            <person name="Pennacchio L.A."/>
        </authorList>
    </citation>
    <scope>NUCLEOTIDE SEQUENCE [LARGE SCALE GENOMIC DNA]</scope>
</reference>
<reference key="4">
    <citation type="submission" date="2005-09" db="EMBL/GenBank/DDBJ databases">
        <authorList>
            <person name="Mural R.J."/>
            <person name="Istrail S."/>
            <person name="Sutton G.G."/>
            <person name="Florea L."/>
            <person name="Halpern A.L."/>
            <person name="Mobarry C.M."/>
            <person name="Lippert R."/>
            <person name="Walenz B."/>
            <person name="Shatkay H."/>
            <person name="Dew I."/>
            <person name="Miller J.R."/>
            <person name="Flanigan M.J."/>
            <person name="Edwards N.J."/>
            <person name="Bolanos R."/>
            <person name="Fasulo D."/>
            <person name="Halldorsson B.V."/>
            <person name="Hannenhalli S."/>
            <person name="Turner R."/>
            <person name="Yooseph S."/>
            <person name="Lu F."/>
            <person name="Nusskern D.R."/>
            <person name="Shue B.C."/>
            <person name="Zheng X.H."/>
            <person name="Zhong F."/>
            <person name="Delcher A.L."/>
            <person name="Huson D.H."/>
            <person name="Kravitz S.A."/>
            <person name="Mouchard L."/>
            <person name="Reinert K."/>
            <person name="Remington K.A."/>
            <person name="Clark A.G."/>
            <person name="Waterman M.S."/>
            <person name="Eichler E.E."/>
            <person name="Adams M.D."/>
            <person name="Hunkapiller M.W."/>
            <person name="Myers E.W."/>
            <person name="Venter J.C."/>
        </authorList>
    </citation>
    <scope>NUCLEOTIDE SEQUENCE [LARGE SCALE GENOMIC DNA]</scope>
</reference>
<reference key="5">
    <citation type="submission" date="1994-12" db="EMBL/GenBank/DDBJ databases">
        <authorList>
            <person name="Tesmer V."/>
            <person name="Babin J."/>
            <person name="Rajadhyaksha A."/>
            <person name="Bina M."/>
        </authorList>
    </citation>
    <scope>NUCLEOTIDE SEQUENCE [MRNA] OF 348-691 (ISOFORM 1)</scope>
    <source>
        <tissue>Cervix carcinoma</tissue>
    </source>
</reference>
<reference key="6">
    <citation type="journal article" date="2004" name="Cell">
        <title>Histone H3.1 and H3.3 complexes mediate nucleosome assembly pathways dependent or independent of DNA synthesis.</title>
        <authorList>
            <person name="Tagami H."/>
            <person name="Ray-Gallet D."/>
            <person name="Almouzni G."/>
            <person name="Nakatani Y."/>
        </authorList>
    </citation>
    <scope>FUNCTION</scope>
    <scope>IDENTIFICATION BY MASS SPECTROMETRY</scope>
    <scope>IDENTIFICATION IN A COMPLEX WITH ASF1A; CABIN1; HIRA AND HISTONE H3.3</scope>
</reference>
<reference key="7">
    <citation type="journal article" date="2006" name="Cell">
        <title>Global, in vivo, and site-specific phosphorylation dynamics in signaling networks.</title>
        <authorList>
            <person name="Olsen J.V."/>
            <person name="Blagoev B."/>
            <person name="Gnad F."/>
            <person name="Macek B."/>
            <person name="Kumar C."/>
            <person name="Mortensen P."/>
            <person name="Mann M."/>
        </authorList>
    </citation>
    <scope>PHOSPHORYLATION [LARGE SCALE ANALYSIS] AT SER-173 AND SER-175</scope>
    <scope>IDENTIFICATION BY MASS SPECTROMETRY [LARGE SCALE ANALYSIS]</scope>
    <source>
        <tissue>Cervix carcinoma</tissue>
    </source>
</reference>
<reference key="8">
    <citation type="journal article" date="2009" name="Biol. Cell">
        <title>Characterization of the ubinuclein protein as a new member of the nuclear and adhesion complex components (NACos).</title>
        <authorList>
            <person name="Aho S."/>
            <person name="Lupo J."/>
            <person name="Coly P.-A."/>
            <person name="Sabine A."/>
            <person name="Castellazzi M."/>
            <person name="Morand P."/>
            <person name="Sergeant A."/>
            <person name="Manet E."/>
            <person name="Boyer V."/>
            <person name="Gruffat H."/>
        </authorList>
    </citation>
    <scope>INTERACTION WITH TJP1; TJP2 AND TJP3</scope>
    <scope>SUBCELLULAR LOCATION</scope>
</reference>
<reference key="9">
    <citation type="journal article" date="2009" name="Mol. Cell. Biol.">
        <title>Human UBN1 is an ortholog of yeast Hpc2p and has an essential role in the HIRA/ASF1a chromatin-remodeling pathway in senescent cells.</title>
        <authorList>
            <person name="Banumathy G."/>
            <person name="Somaiah N."/>
            <person name="Zhang R."/>
            <person name="Tang Y."/>
            <person name="Hoffmann J."/>
            <person name="Andrake M."/>
            <person name="Ceulemans H."/>
            <person name="Schultz D."/>
            <person name="Marmorstein R."/>
            <person name="Adams P.D."/>
        </authorList>
    </citation>
    <scope>FUNCTION</scope>
    <scope>DNA-BINDING</scope>
    <scope>INTERACTION WITH ASF1A AND HIRA</scope>
    <scope>SUBCELLULAR LOCATION</scope>
    <scope>MUTAGENESIS OF 138-PHE--ASP-140; PHE-160 AND ILE-162</scope>
    <scope>TISSUE SPECIFICITY</scope>
</reference>
<reference key="10">
    <citation type="journal article" date="2009" name="Sci. Signal.">
        <title>Quantitative phosphoproteomic analysis of T cell receptor signaling reveals system-wide modulation of protein-protein interactions.</title>
        <authorList>
            <person name="Mayya V."/>
            <person name="Lundgren D.H."/>
            <person name="Hwang S.-I."/>
            <person name="Rezaul K."/>
            <person name="Wu L."/>
            <person name="Eng J.K."/>
            <person name="Rodionov V."/>
            <person name="Han D.K."/>
        </authorList>
    </citation>
    <scope>PHOSPHORYLATION [LARGE SCALE ANALYSIS] AT SER-336; SER-660; SER-677 AND SER-1025</scope>
    <scope>IDENTIFICATION BY MASS SPECTROMETRY [LARGE SCALE ANALYSIS]</scope>
    <source>
        <tissue>Leukemic T-cell</tissue>
    </source>
</reference>
<reference key="11">
    <citation type="journal article" date="2009" name="Science">
        <title>Lysine acetylation targets protein complexes and co-regulates major cellular functions.</title>
        <authorList>
            <person name="Choudhary C."/>
            <person name="Kumar C."/>
            <person name="Gnad F."/>
            <person name="Nielsen M.L."/>
            <person name="Rehman M."/>
            <person name="Walther T.C."/>
            <person name="Olsen J.V."/>
            <person name="Mann M."/>
        </authorList>
    </citation>
    <scope>ACETYLATION [LARGE SCALE ANALYSIS] AT LYS-222</scope>
    <scope>IDENTIFICATION BY MASS SPECTROMETRY [LARGE SCALE ANALYSIS]</scope>
</reference>
<reference key="12">
    <citation type="journal article" date="2010" name="Sci. Signal.">
        <title>Quantitative phosphoproteomics reveals widespread full phosphorylation site occupancy during mitosis.</title>
        <authorList>
            <person name="Olsen J.V."/>
            <person name="Vermeulen M."/>
            <person name="Santamaria A."/>
            <person name="Kumar C."/>
            <person name="Miller M.L."/>
            <person name="Jensen L.J."/>
            <person name="Gnad F."/>
            <person name="Cox J."/>
            <person name="Jensen T.S."/>
            <person name="Nigg E.A."/>
            <person name="Brunak S."/>
            <person name="Mann M."/>
        </authorList>
    </citation>
    <scope>PHOSPHORYLATION [LARGE SCALE ANALYSIS] AT SER-336; SER-338 AND SER-660</scope>
    <scope>IDENTIFICATION BY MASS SPECTROMETRY [LARGE SCALE ANALYSIS]</scope>
    <source>
        <tissue>Cervix carcinoma</tissue>
    </source>
</reference>
<reference key="13">
    <citation type="journal article" date="2011" name="Sci. Signal.">
        <title>System-wide temporal characterization of the proteome and phosphoproteome of human embryonic stem cell differentiation.</title>
        <authorList>
            <person name="Rigbolt K.T."/>
            <person name="Prokhorova T.A."/>
            <person name="Akimov V."/>
            <person name="Henningsen J."/>
            <person name="Johansen P.T."/>
            <person name="Kratchmarova I."/>
            <person name="Kassem M."/>
            <person name="Mann M."/>
            <person name="Olsen J.V."/>
            <person name="Blagoev B."/>
        </authorList>
    </citation>
    <scope>PHOSPHORYLATION [LARGE SCALE ANALYSIS] AT SER-493</scope>
    <scope>IDENTIFICATION BY MASS SPECTROMETRY [LARGE SCALE ANALYSIS]</scope>
</reference>
<reference key="14">
    <citation type="journal article" date="2013" name="J. Proteome Res.">
        <title>Toward a comprehensive characterization of a human cancer cell phosphoproteome.</title>
        <authorList>
            <person name="Zhou H."/>
            <person name="Di Palma S."/>
            <person name="Preisinger C."/>
            <person name="Peng M."/>
            <person name="Polat A.N."/>
            <person name="Heck A.J."/>
            <person name="Mohammed S."/>
        </authorList>
    </citation>
    <scope>PHOSPHORYLATION [LARGE SCALE ANALYSIS] AT THR-166</scope>
    <scope>IDENTIFICATION BY MASS SPECTROMETRY [LARGE SCALE ANALYSIS]</scope>
    <source>
        <tissue>Erythroleukemia</tissue>
    </source>
</reference>
<reference key="15">
    <citation type="journal article" date="2014" name="J. Proteomics">
        <title>An enzyme assisted RP-RPLC approach for in-depth analysis of human liver phosphoproteome.</title>
        <authorList>
            <person name="Bian Y."/>
            <person name="Song C."/>
            <person name="Cheng K."/>
            <person name="Dong M."/>
            <person name="Wang F."/>
            <person name="Huang J."/>
            <person name="Sun D."/>
            <person name="Wang L."/>
            <person name="Ye M."/>
            <person name="Zou H."/>
        </authorList>
    </citation>
    <scope>PHOSPHORYLATION [LARGE SCALE ANALYSIS] AT SER-323; SER-493 AND SER-660</scope>
    <scope>IDENTIFICATION BY MASS SPECTROMETRY [LARGE SCALE ANALYSIS]</scope>
    <source>
        <tissue>Liver</tissue>
    </source>
</reference>
<feature type="chain" id="PRO_0000065712" description="Ubinuclein-1">
    <location>
        <begin position="1"/>
        <end position="1134"/>
    </location>
</feature>
<feature type="region of interest" description="Sufficient for interaction with HIRA" evidence="6">
    <location>
        <begin position="1"/>
        <end position="166"/>
    </location>
</feature>
<feature type="region of interest" description="Disordered" evidence="2">
    <location>
        <begin position="1"/>
        <end position="38"/>
    </location>
</feature>
<feature type="region of interest" description="Disordered" evidence="2">
    <location>
        <begin position="78"/>
        <end position="98"/>
    </location>
</feature>
<feature type="region of interest" description="Disordered" evidence="2">
    <location>
        <begin position="171"/>
        <end position="220"/>
    </location>
</feature>
<feature type="region of interest" description="Disordered" evidence="2">
    <location>
        <begin position="253"/>
        <end position="282"/>
    </location>
</feature>
<feature type="region of interest" description="Disordered" evidence="2">
    <location>
        <begin position="321"/>
        <end position="358"/>
    </location>
</feature>
<feature type="region of interest" description="Disordered" evidence="2">
    <location>
        <begin position="480"/>
        <end position="504"/>
    </location>
</feature>
<feature type="region of interest" description="Disordered" evidence="2">
    <location>
        <begin position="594"/>
        <end position="660"/>
    </location>
</feature>
<feature type="region of interest" description="Disordered" evidence="2">
    <location>
        <begin position="712"/>
        <end position="836"/>
    </location>
</feature>
<feature type="region of interest" description="Disordered" evidence="2">
    <location>
        <begin position="852"/>
        <end position="986"/>
    </location>
</feature>
<feature type="region of interest" description="Disordered" evidence="2">
    <location>
        <begin position="1093"/>
        <end position="1134"/>
    </location>
</feature>
<feature type="coiled-coil region" evidence="1">
    <location>
        <begin position="479"/>
        <end position="542"/>
    </location>
</feature>
<feature type="compositionally biased region" description="Basic and acidic residues" evidence="2">
    <location>
        <begin position="25"/>
        <end position="38"/>
    </location>
</feature>
<feature type="compositionally biased region" description="Basic and acidic residues" evidence="2">
    <location>
        <begin position="81"/>
        <end position="98"/>
    </location>
</feature>
<feature type="compositionally biased region" description="Basic residues" evidence="2">
    <location>
        <begin position="182"/>
        <end position="193"/>
    </location>
</feature>
<feature type="compositionally biased region" description="Basic and acidic residues" evidence="2">
    <location>
        <begin position="194"/>
        <end position="213"/>
    </location>
</feature>
<feature type="compositionally biased region" description="Basic and acidic residues" evidence="2">
    <location>
        <begin position="253"/>
        <end position="268"/>
    </location>
</feature>
<feature type="compositionally biased region" description="Basic and acidic residues" evidence="2">
    <location>
        <begin position="480"/>
        <end position="493"/>
    </location>
</feature>
<feature type="compositionally biased region" description="Basic and acidic residues" evidence="2">
    <location>
        <begin position="598"/>
        <end position="610"/>
    </location>
</feature>
<feature type="compositionally biased region" description="Low complexity" evidence="2">
    <location>
        <begin position="792"/>
        <end position="804"/>
    </location>
</feature>
<feature type="compositionally biased region" description="Low complexity" evidence="2">
    <location>
        <begin position="856"/>
        <end position="891"/>
    </location>
</feature>
<feature type="compositionally biased region" description="Polar residues" evidence="2">
    <location>
        <begin position="892"/>
        <end position="905"/>
    </location>
</feature>
<feature type="compositionally biased region" description="Low complexity" evidence="2">
    <location>
        <begin position="906"/>
        <end position="932"/>
    </location>
</feature>
<feature type="compositionally biased region" description="Polar residues" evidence="2">
    <location>
        <begin position="941"/>
        <end position="950"/>
    </location>
</feature>
<feature type="compositionally biased region" description="Gly residues" evidence="2">
    <location>
        <begin position="973"/>
        <end position="982"/>
    </location>
</feature>
<feature type="compositionally biased region" description="Low complexity" evidence="2">
    <location>
        <begin position="1093"/>
        <end position="1108"/>
    </location>
</feature>
<feature type="modified residue" description="Phosphothreonine" evidence="14">
    <location>
        <position position="166"/>
    </location>
</feature>
<feature type="modified residue" description="Phosphoserine" evidence="9">
    <location>
        <position position="173"/>
    </location>
</feature>
<feature type="modified residue" description="Phosphoserine" evidence="9">
    <location>
        <position position="175"/>
    </location>
</feature>
<feature type="modified residue" description="N6-acetyllysine" evidence="10">
    <location>
        <position position="222"/>
    </location>
</feature>
<feature type="modified residue" description="Phosphoserine" evidence="15">
    <location>
        <position position="323"/>
    </location>
</feature>
<feature type="modified residue" description="Phosphoserine" evidence="11 12">
    <location>
        <position position="336"/>
    </location>
</feature>
<feature type="modified residue" description="Phosphoserine" evidence="12">
    <location>
        <position position="338"/>
    </location>
</feature>
<feature type="modified residue" description="Phosphoserine" evidence="13 15">
    <location>
        <position position="493"/>
    </location>
</feature>
<feature type="modified residue" description="Phosphoserine" evidence="11 12 15">
    <location>
        <position position="660"/>
    </location>
</feature>
<feature type="modified residue" description="Phosphoserine" evidence="11">
    <location>
        <position position="677"/>
    </location>
</feature>
<feature type="modified residue" description="Phosphoserine" evidence="11">
    <location>
        <position position="1025"/>
    </location>
</feature>
<feature type="splice variant" id="VSP_036971" description="In isoform 2." evidence="7">
    <location>
        <begin position="1090"/>
        <end position="1119"/>
    </location>
</feature>
<feature type="sequence variant" id="VAR_051465" description="In dbSNP:rs35103368.">
    <original>Y</original>
    <variation>C</variation>
    <location>
        <position position="435"/>
    </location>
</feature>
<feature type="mutagenesis site" description="Strongly diminishes interaction with HIRA; when associated with E-139 and L-140.">
    <original>F</original>
    <variation>E</variation>
    <location>
        <position position="138"/>
    </location>
</feature>
<feature type="mutagenesis site" description="Strongly diminishes interaction with HIRA; when associated with E-138 and L-140.">
    <original>I</original>
    <variation>E</variation>
    <location>
        <position position="139"/>
    </location>
</feature>
<feature type="mutagenesis site" description="Strongly diminishes interaction with HIRA; when associated with E-138 and L-139.">
    <original>D</original>
    <variation>L</variation>
    <location>
        <position position="140"/>
    </location>
</feature>
<feature type="mutagenesis site" description="Strongly diminishes interaction with HIRA." evidence="6">
    <original>F</original>
    <variation>E</variation>
    <location>
        <position position="160"/>
    </location>
</feature>
<feature type="mutagenesis site" description="Strongly diminishes interaction with HIRA." evidence="6">
    <original>I</original>
    <variation>E</variation>
    <location>
        <position position="162"/>
    </location>
</feature>
<feature type="sequence conflict" description="In Ref. 2; BAH13219." evidence="8" ref="2">
    <original>K</original>
    <variation>N</variation>
    <location>
        <position position="119"/>
    </location>
</feature>
<feature type="sequence conflict" description="In Ref. 1; AAF31755/AAF31756." evidence="8" ref="1">
    <original>A</original>
    <variation>V</variation>
    <location>
        <position position="276"/>
    </location>
</feature>
<feature type="sequence conflict" description="In Ref. 2; BAH13219." evidence="8" ref="2">
    <original>Q</original>
    <variation>H</variation>
    <location>
        <position position="277"/>
    </location>
</feature>
<feature type="sequence conflict" description="In Ref. 1; AAF31755/AAF31756." evidence="8" ref="1">
    <original>F</original>
    <variation>L</variation>
    <location>
        <position position="718"/>
    </location>
</feature>
<feature type="sequence conflict" description="In Ref. 1; AAF31755/AAF31756." evidence="8" ref="1">
    <original>A</original>
    <variation>P</variation>
    <location>
        <position position="945"/>
    </location>
</feature>
<feature type="helix" evidence="16">
    <location>
        <begin position="123"/>
        <end position="127"/>
    </location>
</feature>
<feature type="turn" evidence="16">
    <location>
        <begin position="128"/>
        <end position="131"/>
    </location>
</feature>
<sequence>MSEPHRVQFTSLPGSLNPAFLKKSRKEEAGAGEQHQDCEPAAAAVRITLTLFEPDHKRCPEFFYPELVKNIRGKVKGLQPGDKKKDLSDPFNDEEKERHKVEALARKFEEKYGGKKRRKDRIQDLIDMGYGYDESDSFIDNSEAYDELVPASLTTKYGGFYINSGTLQFRQASESEDDFIKEKKKKSPKKRKLKEGGEKIKKKKKDDTYDKEKKSKKSKFSKAGFTALNASKEKKKKKYSGALSVKEMLKKFQKEKEAQKKREEEHKPVAVPSAEAQGLRELEGASDPLLSLFGSTSDNDLLQAATAMDSLTDLDLEHLLSESPEGSPFRDMDDGSDSLGVGLDQEFRQPSSLPEGLPAPLEKRVKELAQAARAAEGESRQKFFTQDINGILLDIEAQTRELSSQVRSGVYAYLASFLPCSKDALLKRARKLHLYEQGGRLKEPLQKLKEAIGRAMPEQMAKYQDECQAHTQAKVAKMLEEEKDKEQRDRICSDEEEDEEKGGRRIMGPRKKFQWNDEIRELLCQVVKIKLESQDLERNNKAQAWEDCVKGFLDAEVKPLWPKGWMQARTLFKESRRGHGHLTSILAKKKVMAPSKIKVKESSTKPDKKVSVPSGQIGGPIALPSDHQTGGLSIGASSRELPSQASGGLANPPPVNLEDSLDEDLIRNPASSVEAVSKELAALNSRAAGNSEFTLPAPSKAPAEKVGGVLCTEEKRNFAKPSPSAPPPASSLQSPLNFLAEQALALGQSSQEKKPESSGYKELSCQAPLNKGLPEVHQSKAKHHSLPRTSHGPQVAVPVPGPQVKVFHAGTQQQKNFTPPSPFANKLQGPKASPTQCHRSLLQLVKTAAKGQGFHPSAPATSGGLSASSSSSHKTPASSSSALSHPAKPHSVSSAGSSYKNNPFASSISKHGVSSGSSSSGGTPVQSSVSGSLVPGIQPPSVGQATSRPVPSSAGKKMPVSQKLTLVAPPGGPNGDSSGGTQGVAKLLTSPSLKPSAVSSVTSSTSLSKGASGTVLLAGSSLMASPYKSSSPKLSGAMSSNSLGIITPVPIPVHVLSFSADSSAKAGVSKDAIVTGPAPGSFHHGLGHSLLAGLHSSPPHAAPLPHAAVPTHIPQSLPGASQLHGKGPAVPRKL</sequence>
<proteinExistence type="evidence at protein level"/>
<accession>Q9NPG3</accession>
<accession>B7Z6D3</accession>
<accession>D3DUE8</accession>
<accession>Q13079</accession>
<accession>Q9P1P7</accession>
<organism>
    <name type="scientific">Homo sapiens</name>
    <name type="common">Human</name>
    <dbReference type="NCBI Taxonomy" id="9606"/>
    <lineage>
        <taxon>Eukaryota</taxon>
        <taxon>Metazoa</taxon>
        <taxon>Chordata</taxon>
        <taxon>Craniata</taxon>
        <taxon>Vertebrata</taxon>
        <taxon>Euteleostomi</taxon>
        <taxon>Mammalia</taxon>
        <taxon>Eutheria</taxon>
        <taxon>Euarchontoglires</taxon>
        <taxon>Primates</taxon>
        <taxon>Haplorrhini</taxon>
        <taxon>Catarrhini</taxon>
        <taxon>Hominidae</taxon>
        <taxon>Homo</taxon>
    </lineage>
</organism>
<name>UBN1_HUMAN</name>